<keyword id="KW-0238">DNA-binding</keyword>
<keyword id="KW-0597">Phosphoprotein</keyword>
<keyword id="KW-0804">Transcription</keyword>
<keyword id="KW-0805">Transcription regulation</keyword>
<keyword id="KW-0902">Two-component regulatory system</keyword>
<feature type="chain" id="PRO_0000081374" description="Uncharacterized response regulatory protein VPA0021">
    <location>
        <begin position="1"/>
        <end position="263"/>
    </location>
</feature>
<feature type="domain" description="Response regulatory" evidence="2">
    <location>
        <begin position="6"/>
        <end position="121"/>
    </location>
</feature>
<feature type="domain" description="HTH LytTR-type" evidence="1">
    <location>
        <begin position="158"/>
        <end position="263"/>
    </location>
</feature>
<feature type="modified residue" description="4-aspartylphosphate" evidence="2">
    <location>
        <position position="58"/>
    </location>
</feature>
<protein>
    <recommendedName>
        <fullName>Uncharacterized response regulatory protein VPA0021</fullName>
    </recommendedName>
</protein>
<accession>Q87K77</accession>
<organism>
    <name type="scientific">Vibrio parahaemolyticus serotype O3:K6 (strain RIMD 2210633)</name>
    <dbReference type="NCBI Taxonomy" id="223926"/>
    <lineage>
        <taxon>Bacteria</taxon>
        <taxon>Pseudomonadati</taxon>
        <taxon>Pseudomonadota</taxon>
        <taxon>Gammaproteobacteria</taxon>
        <taxon>Vibrionales</taxon>
        <taxon>Vibrionaceae</taxon>
        <taxon>Vibrio</taxon>
    </lineage>
</organism>
<reference key="1">
    <citation type="journal article" date="2003" name="Lancet">
        <title>Genome sequence of Vibrio parahaemolyticus: a pathogenic mechanism distinct from that of V. cholerae.</title>
        <authorList>
            <person name="Makino K."/>
            <person name="Oshima K."/>
            <person name="Kurokawa K."/>
            <person name="Yokoyama K."/>
            <person name="Uda T."/>
            <person name="Tagomori K."/>
            <person name="Iijima Y."/>
            <person name="Najima M."/>
            <person name="Nakano M."/>
            <person name="Yamashita A."/>
            <person name="Kubota Y."/>
            <person name="Kimura S."/>
            <person name="Yasunaga T."/>
            <person name="Honda T."/>
            <person name="Shinagawa H."/>
            <person name="Hattori M."/>
            <person name="Iida T."/>
        </authorList>
    </citation>
    <scope>NUCLEOTIDE SEQUENCE [LARGE SCALE GENOMIC DNA]</scope>
    <source>
        <strain>RIMD 2210633</strain>
    </source>
</reference>
<proteinExistence type="inferred from homology"/>
<name>Y4021_VIBPA</name>
<sequence length="263" mass="29610">MNTGFTAIIADDEPLLRHHLDKSLAEVWPELDIVAKVADGEQALLAIEQSQPDIAFLDIRMPVLDGMSLAQKLNRLANPPLIVFVTAYDDYAIKAFEQNAADYLLKPISDARLQTTCERVKARLSQRGSDNSHVQMNSLLEQLQQLSAPQTPQYLQWIKATQGDDIHLIATSDVLYFKAEEKYVSVYAQQGKGEVQEYLIRTSLKELIGQLNPEQFWQVHRSSVVQVSKISKVNKDFAGRMFVYVGETKLPVSRASQSLFKGM</sequence>
<evidence type="ECO:0000255" key="1">
    <source>
        <dbReference type="PROSITE-ProRule" id="PRU00112"/>
    </source>
</evidence>
<evidence type="ECO:0000255" key="2">
    <source>
        <dbReference type="PROSITE-ProRule" id="PRU00169"/>
    </source>
</evidence>
<gene>
    <name type="ordered locus">VPA0021</name>
</gene>
<dbReference type="EMBL" id="BA000032">
    <property type="protein sequence ID" value="BAC61364.1"/>
    <property type="molecule type" value="Genomic_DNA"/>
</dbReference>
<dbReference type="RefSeq" id="NP_799531.1">
    <property type="nucleotide sequence ID" value="NC_004605.1"/>
</dbReference>
<dbReference type="RefSeq" id="WP_005481713.1">
    <property type="nucleotide sequence ID" value="NC_004605.1"/>
</dbReference>
<dbReference type="GeneID" id="1190700"/>
<dbReference type="KEGG" id="vpa:VPA0021"/>
<dbReference type="PATRIC" id="fig|223926.6.peg.2985"/>
<dbReference type="eggNOG" id="COG3279">
    <property type="taxonomic scope" value="Bacteria"/>
</dbReference>
<dbReference type="HOGENOM" id="CLU_000445_14_1_6"/>
<dbReference type="Proteomes" id="UP000002493">
    <property type="component" value="Chromosome 2"/>
</dbReference>
<dbReference type="GO" id="GO:0005829">
    <property type="term" value="C:cytosol"/>
    <property type="evidence" value="ECO:0007669"/>
    <property type="project" value="TreeGrafter"/>
</dbReference>
<dbReference type="GO" id="GO:0032993">
    <property type="term" value="C:protein-DNA complex"/>
    <property type="evidence" value="ECO:0007669"/>
    <property type="project" value="TreeGrafter"/>
</dbReference>
<dbReference type="GO" id="GO:0000156">
    <property type="term" value="F:phosphorelay response regulator activity"/>
    <property type="evidence" value="ECO:0007669"/>
    <property type="project" value="TreeGrafter"/>
</dbReference>
<dbReference type="GO" id="GO:0000976">
    <property type="term" value="F:transcription cis-regulatory region binding"/>
    <property type="evidence" value="ECO:0007669"/>
    <property type="project" value="TreeGrafter"/>
</dbReference>
<dbReference type="GO" id="GO:0006355">
    <property type="term" value="P:regulation of DNA-templated transcription"/>
    <property type="evidence" value="ECO:0007669"/>
    <property type="project" value="TreeGrafter"/>
</dbReference>
<dbReference type="CDD" id="cd17532">
    <property type="entry name" value="REC_LytTR_AlgR-like"/>
    <property type="match status" value="1"/>
</dbReference>
<dbReference type="Gene3D" id="3.40.50.2300">
    <property type="match status" value="1"/>
</dbReference>
<dbReference type="Gene3D" id="2.40.50.1020">
    <property type="entry name" value="LytTr DNA-binding domain"/>
    <property type="match status" value="1"/>
</dbReference>
<dbReference type="InterPro" id="IPR011006">
    <property type="entry name" value="CheY-like_superfamily"/>
</dbReference>
<dbReference type="InterPro" id="IPR007492">
    <property type="entry name" value="LytTR_DNA-bd_dom"/>
</dbReference>
<dbReference type="InterPro" id="IPR001789">
    <property type="entry name" value="Sig_transdc_resp-reg_receiver"/>
</dbReference>
<dbReference type="InterPro" id="IPR039420">
    <property type="entry name" value="WalR-like"/>
</dbReference>
<dbReference type="PANTHER" id="PTHR48111">
    <property type="entry name" value="REGULATOR OF RPOS"/>
    <property type="match status" value="1"/>
</dbReference>
<dbReference type="PANTHER" id="PTHR48111:SF69">
    <property type="entry name" value="RESPONSE REGULATOR RECEIVER"/>
    <property type="match status" value="1"/>
</dbReference>
<dbReference type="Pfam" id="PF04397">
    <property type="entry name" value="LytTR"/>
    <property type="match status" value="1"/>
</dbReference>
<dbReference type="Pfam" id="PF00072">
    <property type="entry name" value="Response_reg"/>
    <property type="match status" value="1"/>
</dbReference>
<dbReference type="SMART" id="SM00850">
    <property type="entry name" value="LytTR"/>
    <property type="match status" value="1"/>
</dbReference>
<dbReference type="SMART" id="SM00448">
    <property type="entry name" value="REC"/>
    <property type="match status" value="1"/>
</dbReference>
<dbReference type="SUPFAM" id="SSF52172">
    <property type="entry name" value="CheY-like"/>
    <property type="match status" value="1"/>
</dbReference>
<dbReference type="PROSITE" id="PS50930">
    <property type="entry name" value="HTH_LYTTR"/>
    <property type="match status" value="1"/>
</dbReference>
<dbReference type="PROSITE" id="PS50110">
    <property type="entry name" value="RESPONSE_REGULATORY"/>
    <property type="match status" value="1"/>
</dbReference>